<comment type="function">
    <text evidence="1">Required for the insertion and/or proper folding and/or complex formation of integral membrane proteins into the membrane. Involved in integration of membrane proteins that insert both dependently and independently of the Sec translocase complex, as well as at least some lipoproteins. Aids folding of multispanning membrane proteins.</text>
</comment>
<comment type="subunit">
    <text evidence="1">Interacts with the Sec translocase complex via SecD. Specifically interacts with transmembrane segments of nascent integral membrane proteins during membrane integration.</text>
</comment>
<comment type="subcellular location">
    <subcellularLocation>
        <location evidence="1">Cell inner membrane</location>
        <topology evidence="1">Multi-pass membrane protein</topology>
    </subcellularLocation>
</comment>
<comment type="similarity">
    <text evidence="1">Belongs to the OXA1/ALB3/YidC family. Type 1 subfamily.</text>
</comment>
<sequence>MENKRNFFITIALSILILALWQVFYLGPKTEAQREQARIEEQQRQAQQAAQNRQASSSTGDTPQMPANPDSIPGQGDTKAAGAPLTRDAAIAQSPRIEIDTPSLRGSINLTGARLDDLYLKKYHETVSDKSPEIELLAPSSLKQGYFVELGFTGNDATGAVPGPNTVWVVEGNNKLTPSTPVTLTYTNDKNLTFKRVISVDDAYMFTVDDTIINNGGSTVSLASYGRVTRFNQPEHASATYVLHEGLIGVMGQDGLQEIKYAKIKDNKDISFKDVIGGWVGITDKYWAATLIPPQDEKFTGRFSHFTNDRPRYQSDLLSAPLTVAPGQSQKIQNRVFAGAKVVNTIQNYETKYHIKQFDLLIDWGWFYFITKPMFYLIDWIYKFTGNFGVAILVVTVLLKALFFPLANKSYKSMARMKLMQPKMTEIREKYADDKMKQQQAMMELYKREKINPLAGCWPVLVQIPVFFALYKVLYVTIEMRHAPFFGWIQDLAAPDPTSIFNLFGLLPYTVPHFLMIGVWPIIMGITMFLQMRMNPTPPDPTQAAIFTWMPIIFTFMLASFPAGLVIYWAWNNTLSIIQQSVIMKRQGVKIELFDNLKGLFRRKPKEANK</sequence>
<evidence type="ECO:0000255" key="1">
    <source>
        <dbReference type="HAMAP-Rule" id="MF_01810"/>
    </source>
</evidence>
<evidence type="ECO:0000256" key="2">
    <source>
        <dbReference type="SAM" id="MobiDB-lite"/>
    </source>
</evidence>
<dbReference type="EMBL" id="AE014292">
    <property type="protein sequence ID" value="AAN34191.1"/>
    <property type="molecule type" value="Genomic_DNA"/>
</dbReference>
<dbReference type="EMBL" id="CP002998">
    <property type="protein sequence ID" value="AEM20467.1"/>
    <property type="molecule type" value="Genomic_DNA"/>
</dbReference>
<dbReference type="RefSeq" id="WP_006192249.1">
    <property type="nucleotide sequence ID" value="NZ_KN046805.1"/>
</dbReference>
<dbReference type="SMR" id="Q8FV29"/>
<dbReference type="GeneID" id="45054011"/>
<dbReference type="KEGG" id="bms:BRA1023"/>
<dbReference type="KEGG" id="bsi:BS1330_II1015"/>
<dbReference type="PATRIC" id="fig|204722.21.peg.1096"/>
<dbReference type="HOGENOM" id="CLU_016535_1_0_5"/>
<dbReference type="PhylomeDB" id="Q8FV29"/>
<dbReference type="Proteomes" id="UP000007104">
    <property type="component" value="Chromosome II"/>
</dbReference>
<dbReference type="GO" id="GO:0005886">
    <property type="term" value="C:plasma membrane"/>
    <property type="evidence" value="ECO:0007669"/>
    <property type="project" value="UniProtKB-SubCell"/>
</dbReference>
<dbReference type="GO" id="GO:0032977">
    <property type="term" value="F:membrane insertase activity"/>
    <property type="evidence" value="ECO:0007669"/>
    <property type="project" value="InterPro"/>
</dbReference>
<dbReference type="GO" id="GO:0051205">
    <property type="term" value="P:protein insertion into membrane"/>
    <property type="evidence" value="ECO:0007669"/>
    <property type="project" value="TreeGrafter"/>
</dbReference>
<dbReference type="GO" id="GO:0015031">
    <property type="term" value="P:protein transport"/>
    <property type="evidence" value="ECO:0007669"/>
    <property type="project" value="UniProtKB-KW"/>
</dbReference>
<dbReference type="CDD" id="cd20070">
    <property type="entry name" value="5TM_YidC_Alb3"/>
    <property type="match status" value="1"/>
</dbReference>
<dbReference type="CDD" id="cd19961">
    <property type="entry name" value="EcYidC-like_peri"/>
    <property type="match status" value="1"/>
</dbReference>
<dbReference type="Gene3D" id="2.70.98.90">
    <property type="match status" value="1"/>
</dbReference>
<dbReference type="HAMAP" id="MF_01810">
    <property type="entry name" value="YidC_type1"/>
    <property type="match status" value="1"/>
</dbReference>
<dbReference type="InterPro" id="IPR019998">
    <property type="entry name" value="Membr_insert_YidC"/>
</dbReference>
<dbReference type="InterPro" id="IPR028053">
    <property type="entry name" value="Membr_insert_YidC_N"/>
</dbReference>
<dbReference type="InterPro" id="IPR001708">
    <property type="entry name" value="YidC/ALB3/OXA1/COX18"/>
</dbReference>
<dbReference type="InterPro" id="IPR028055">
    <property type="entry name" value="YidC/Oxa/ALB_C"/>
</dbReference>
<dbReference type="InterPro" id="IPR047196">
    <property type="entry name" value="YidC_ALB_C"/>
</dbReference>
<dbReference type="InterPro" id="IPR038221">
    <property type="entry name" value="YidC_periplasmic_sf"/>
</dbReference>
<dbReference type="NCBIfam" id="NF002353">
    <property type="entry name" value="PRK01318.1-4"/>
    <property type="match status" value="1"/>
</dbReference>
<dbReference type="NCBIfam" id="TIGR03593">
    <property type="entry name" value="yidC_nterm"/>
    <property type="match status" value="1"/>
</dbReference>
<dbReference type="NCBIfam" id="TIGR03592">
    <property type="entry name" value="yidC_oxa1_cterm"/>
    <property type="match status" value="1"/>
</dbReference>
<dbReference type="PANTHER" id="PTHR12428:SF65">
    <property type="entry name" value="CYTOCHROME C OXIDASE ASSEMBLY PROTEIN COX18, MITOCHONDRIAL"/>
    <property type="match status" value="1"/>
</dbReference>
<dbReference type="PANTHER" id="PTHR12428">
    <property type="entry name" value="OXA1"/>
    <property type="match status" value="1"/>
</dbReference>
<dbReference type="Pfam" id="PF02096">
    <property type="entry name" value="60KD_IMP"/>
    <property type="match status" value="1"/>
</dbReference>
<dbReference type="Pfam" id="PF14849">
    <property type="entry name" value="YidC_periplas"/>
    <property type="match status" value="1"/>
</dbReference>
<dbReference type="PRINTS" id="PR00701">
    <property type="entry name" value="60KDINNERMP"/>
</dbReference>
<dbReference type="PRINTS" id="PR01900">
    <property type="entry name" value="YIDCPROTEIN"/>
</dbReference>
<organism>
    <name type="scientific">Brucella suis biovar 1 (strain 1330)</name>
    <dbReference type="NCBI Taxonomy" id="204722"/>
    <lineage>
        <taxon>Bacteria</taxon>
        <taxon>Pseudomonadati</taxon>
        <taxon>Pseudomonadota</taxon>
        <taxon>Alphaproteobacteria</taxon>
        <taxon>Hyphomicrobiales</taxon>
        <taxon>Brucellaceae</taxon>
        <taxon>Brucella/Ochrobactrum group</taxon>
        <taxon>Brucella</taxon>
    </lineage>
</organism>
<proteinExistence type="inferred from homology"/>
<accession>Q8FV29</accession>
<accession>G0KE29</accession>
<feature type="chain" id="PRO_0000124695" description="Membrane protein insertase YidC">
    <location>
        <begin position="1"/>
        <end position="610"/>
    </location>
</feature>
<feature type="transmembrane region" description="Helical" evidence="1">
    <location>
        <begin position="7"/>
        <end position="27"/>
    </location>
</feature>
<feature type="transmembrane region" description="Helical" evidence="1">
    <location>
        <begin position="358"/>
        <end position="378"/>
    </location>
</feature>
<feature type="transmembrane region" description="Helical" evidence="1">
    <location>
        <begin position="387"/>
        <end position="407"/>
    </location>
</feature>
<feature type="transmembrane region" description="Helical" evidence="1">
    <location>
        <begin position="458"/>
        <end position="478"/>
    </location>
</feature>
<feature type="transmembrane region" description="Helical" evidence="1">
    <location>
        <begin position="510"/>
        <end position="530"/>
    </location>
</feature>
<feature type="transmembrane region" description="Helical" evidence="1">
    <location>
        <begin position="546"/>
        <end position="566"/>
    </location>
</feature>
<feature type="region of interest" description="Disordered" evidence="2">
    <location>
        <begin position="36"/>
        <end position="82"/>
    </location>
</feature>
<feature type="compositionally biased region" description="Low complexity" evidence="2">
    <location>
        <begin position="44"/>
        <end position="55"/>
    </location>
</feature>
<gene>
    <name evidence="1" type="primary">yidC</name>
    <name type="ordered locus">BRA1023</name>
    <name type="ordered locus">BS1330_II1015</name>
</gene>
<keyword id="KW-0997">Cell inner membrane</keyword>
<keyword id="KW-1003">Cell membrane</keyword>
<keyword id="KW-0143">Chaperone</keyword>
<keyword id="KW-0472">Membrane</keyword>
<keyword id="KW-0653">Protein transport</keyword>
<keyword id="KW-0812">Transmembrane</keyword>
<keyword id="KW-1133">Transmembrane helix</keyword>
<keyword id="KW-0813">Transport</keyword>
<name>YIDC_BRUSU</name>
<reference key="1">
    <citation type="journal article" date="2002" name="Proc. Natl. Acad. Sci. U.S.A.">
        <title>The Brucella suis genome reveals fundamental similarities between animal and plant pathogens and symbionts.</title>
        <authorList>
            <person name="Paulsen I.T."/>
            <person name="Seshadri R."/>
            <person name="Nelson K.E."/>
            <person name="Eisen J.A."/>
            <person name="Heidelberg J.F."/>
            <person name="Read T.D."/>
            <person name="Dodson R.J."/>
            <person name="Umayam L.A."/>
            <person name="Brinkac L.M."/>
            <person name="Beanan M.J."/>
            <person name="Daugherty S.C."/>
            <person name="DeBoy R.T."/>
            <person name="Durkin A.S."/>
            <person name="Kolonay J.F."/>
            <person name="Madupu R."/>
            <person name="Nelson W.C."/>
            <person name="Ayodeji B."/>
            <person name="Kraul M."/>
            <person name="Shetty J."/>
            <person name="Malek J.A."/>
            <person name="Van Aken S.E."/>
            <person name="Riedmuller S."/>
            <person name="Tettelin H."/>
            <person name="Gill S.R."/>
            <person name="White O."/>
            <person name="Salzberg S.L."/>
            <person name="Hoover D.L."/>
            <person name="Lindler L.E."/>
            <person name="Halling S.M."/>
            <person name="Boyle S.M."/>
            <person name="Fraser C.M."/>
        </authorList>
    </citation>
    <scope>NUCLEOTIDE SEQUENCE [LARGE SCALE GENOMIC DNA]</scope>
    <source>
        <strain>1330</strain>
    </source>
</reference>
<reference key="2">
    <citation type="journal article" date="2011" name="J. Bacteriol.">
        <title>Revised genome sequence of Brucella suis 1330.</title>
        <authorList>
            <person name="Tae H."/>
            <person name="Shallom S."/>
            <person name="Settlage R."/>
            <person name="Preston D."/>
            <person name="Adams L.G."/>
            <person name="Garner H.R."/>
        </authorList>
    </citation>
    <scope>NUCLEOTIDE SEQUENCE [LARGE SCALE GENOMIC DNA]</scope>
    <source>
        <strain>1330</strain>
    </source>
</reference>
<protein>
    <recommendedName>
        <fullName evidence="1">Membrane protein insertase YidC</fullName>
    </recommendedName>
    <alternativeName>
        <fullName evidence="1">Foldase YidC</fullName>
    </alternativeName>
    <alternativeName>
        <fullName evidence="1">Membrane integrase YidC</fullName>
    </alternativeName>
    <alternativeName>
        <fullName evidence="1">Membrane protein YidC</fullName>
    </alternativeName>
</protein>